<proteinExistence type="inferred from homology"/>
<feature type="initiator methionine" description="Removed" evidence="1">
    <location>
        <position position="1"/>
    </location>
</feature>
<feature type="chain" id="PRO_0000200524" description="Pyruvate formate-lyase 1-activating enzyme">
    <location>
        <begin position="2"/>
        <end position="246"/>
    </location>
</feature>
<feature type="domain" description="Radical SAM core" evidence="3">
    <location>
        <begin position="16"/>
        <end position="239"/>
    </location>
</feature>
<feature type="binding site" evidence="2">
    <location>
        <position position="30"/>
    </location>
    <ligand>
        <name>[4Fe-4S] cluster</name>
        <dbReference type="ChEBI" id="CHEBI:49883"/>
        <note>4Fe-4S-S-AdoMet</note>
    </ligand>
</feature>
<feature type="binding site" evidence="2">
    <location>
        <position position="34"/>
    </location>
    <ligand>
        <name>[4Fe-4S] cluster</name>
        <dbReference type="ChEBI" id="CHEBI:49883"/>
        <note>4Fe-4S-S-AdoMet</note>
    </ligand>
</feature>
<feature type="binding site" evidence="2">
    <location>
        <begin position="36"/>
        <end position="38"/>
    </location>
    <ligand>
        <name>S-adenosyl-L-methionine</name>
        <dbReference type="ChEBI" id="CHEBI:59789"/>
    </ligand>
</feature>
<feature type="binding site" evidence="2">
    <location>
        <position position="37"/>
    </location>
    <ligand>
        <name>[4Fe-4S] cluster</name>
        <dbReference type="ChEBI" id="CHEBI:49883"/>
        <note>4Fe-4S-S-AdoMet</note>
    </ligand>
</feature>
<feature type="binding site" evidence="2">
    <location>
        <position position="79"/>
    </location>
    <ligand>
        <name>S-adenosyl-L-methionine</name>
        <dbReference type="ChEBI" id="CHEBI:59789"/>
    </ligand>
</feature>
<feature type="binding site" evidence="2">
    <location>
        <begin position="130"/>
        <end position="132"/>
    </location>
    <ligand>
        <name>S-adenosyl-L-methionine</name>
        <dbReference type="ChEBI" id="CHEBI:59789"/>
    </ligand>
</feature>
<feature type="binding site" evidence="2">
    <location>
        <position position="203"/>
    </location>
    <ligand>
        <name>S-adenosyl-L-methionine</name>
        <dbReference type="ChEBI" id="CHEBI:59789"/>
    </ligand>
</feature>
<keyword id="KW-0004">4Fe-4S</keyword>
<keyword id="KW-0119">Carbohydrate metabolism</keyword>
<keyword id="KW-0963">Cytoplasm</keyword>
<keyword id="KW-0313">Glucose metabolism</keyword>
<keyword id="KW-0408">Iron</keyword>
<keyword id="KW-0411">Iron-sulfur</keyword>
<keyword id="KW-0479">Metal-binding</keyword>
<keyword id="KW-0560">Oxidoreductase</keyword>
<keyword id="KW-1185">Reference proteome</keyword>
<keyword id="KW-0949">S-adenosyl-L-methionine</keyword>
<protein>
    <recommendedName>
        <fullName>Pyruvate formate-lyase 1-activating enzyme</fullName>
        <ecNumber>1.97.1.4</ecNumber>
    </recommendedName>
    <alternativeName>
        <fullName>Formate-C-acetyltransferase-activating enzyme 1</fullName>
    </alternativeName>
    <alternativeName>
        <fullName>PFL-activating enzyme 1</fullName>
    </alternativeName>
</protein>
<name>PFLA_ECOL6</name>
<comment type="function">
    <text evidence="1">Activation of pyruvate formate-lyase 1 under anaerobic conditions by generation of an organic free radical, using S-adenosylmethionine and reduced flavodoxin as cosubstrates to produce 5'-deoxy-adenosine.</text>
</comment>
<comment type="catalytic activity">
    <reaction>
        <text>glycyl-[formate C-acetyltransferase] + reduced [flavodoxin] + S-adenosyl-L-methionine = glycin-2-yl radical-[formate C-acetyltransferase] + semiquinone [flavodoxin] + 5'-deoxyadenosine + L-methionine + H(+)</text>
        <dbReference type="Rhea" id="RHEA:19225"/>
        <dbReference type="Rhea" id="RHEA-COMP:10622"/>
        <dbReference type="Rhea" id="RHEA-COMP:12190"/>
        <dbReference type="Rhea" id="RHEA-COMP:12191"/>
        <dbReference type="Rhea" id="RHEA-COMP:14480"/>
        <dbReference type="ChEBI" id="CHEBI:15378"/>
        <dbReference type="ChEBI" id="CHEBI:17319"/>
        <dbReference type="ChEBI" id="CHEBI:29947"/>
        <dbReference type="ChEBI" id="CHEBI:32722"/>
        <dbReference type="ChEBI" id="CHEBI:57618"/>
        <dbReference type="ChEBI" id="CHEBI:57844"/>
        <dbReference type="ChEBI" id="CHEBI:59789"/>
        <dbReference type="ChEBI" id="CHEBI:140311"/>
        <dbReference type="EC" id="1.97.1.4"/>
    </reaction>
</comment>
<comment type="cofactor">
    <cofactor evidence="1">
        <name>[4Fe-4S] cluster</name>
        <dbReference type="ChEBI" id="CHEBI:49883"/>
    </cofactor>
    <text evidence="1">Binds 1 [4Fe-4S] cluster. The cluster is coordinated with 3 cysteines and an exchangeable S-adenosyl-L-methionine.</text>
</comment>
<comment type="subcellular location">
    <subcellularLocation>
        <location evidence="1">Cytoplasm</location>
    </subcellularLocation>
</comment>
<comment type="similarity">
    <text evidence="4">Belongs to the organic radical-activating enzymes family.</text>
</comment>
<comment type="sequence caution" evidence="4">
    <conflict type="erroneous initiation">
        <sequence resource="EMBL-CDS" id="AAN79510"/>
    </conflict>
</comment>
<organism>
    <name type="scientific">Escherichia coli O6:H1 (strain CFT073 / ATCC 700928 / UPEC)</name>
    <dbReference type="NCBI Taxonomy" id="199310"/>
    <lineage>
        <taxon>Bacteria</taxon>
        <taxon>Pseudomonadati</taxon>
        <taxon>Pseudomonadota</taxon>
        <taxon>Gammaproteobacteria</taxon>
        <taxon>Enterobacterales</taxon>
        <taxon>Enterobacteriaceae</taxon>
        <taxon>Escherichia</taxon>
    </lineage>
</organism>
<gene>
    <name type="primary">pflA</name>
    <name type="ordered locus">c1038</name>
</gene>
<dbReference type="EC" id="1.97.1.4"/>
<dbReference type="EMBL" id="AE014075">
    <property type="protein sequence ID" value="AAN79510.1"/>
    <property type="status" value="ALT_INIT"/>
    <property type="molecule type" value="Genomic_DNA"/>
</dbReference>
<dbReference type="RefSeq" id="WP_000111043.1">
    <property type="nucleotide sequence ID" value="NZ_CP051263.1"/>
</dbReference>
<dbReference type="SMR" id="P0A9N5"/>
<dbReference type="STRING" id="199310.c1038"/>
<dbReference type="GeneID" id="93776516"/>
<dbReference type="KEGG" id="ecc:c1038"/>
<dbReference type="eggNOG" id="COG1180">
    <property type="taxonomic scope" value="Bacteria"/>
</dbReference>
<dbReference type="HOGENOM" id="CLU_058969_1_0_6"/>
<dbReference type="Proteomes" id="UP000001410">
    <property type="component" value="Chromosome"/>
</dbReference>
<dbReference type="GO" id="GO:0005737">
    <property type="term" value="C:cytoplasm"/>
    <property type="evidence" value="ECO:0007669"/>
    <property type="project" value="UniProtKB-SubCell"/>
</dbReference>
<dbReference type="GO" id="GO:0051539">
    <property type="term" value="F:4 iron, 4 sulfur cluster binding"/>
    <property type="evidence" value="ECO:0007669"/>
    <property type="project" value="UniProtKB-KW"/>
</dbReference>
<dbReference type="GO" id="GO:0043365">
    <property type="term" value="F:[formate-C-acetyltransferase]-activating enzyme activity"/>
    <property type="evidence" value="ECO:0007669"/>
    <property type="project" value="UniProtKB-EC"/>
</dbReference>
<dbReference type="GO" id="GO:0046872">
    <property type="term" value="F:metal ion binding"/>
    <property type="evidence" value="ECO:0007669"/>
    <property type="project" value="UniProtKB-KW"/>
</dbReference>
<dbReference type="GO" id="GO:0006006">
    <property type="term" value="P:glucose metabolic process"/>
    <property type="evidence" value="ECO:0007669"/>
    <property type="project" value="UniProtKB-KW"/>
</dbReference>
<dbReference type="CDD" id="cd01335">
    <property type="entry name" value="Radical_SAM"/>
    <property type="match status" value="1"/>
</dbReference>
<dbReference type="FunFam" id="3.20.20.70:FF:000050">
    <property type="entry name" value="Pyruvate formate-lyase-activating enzyme"/>
    <property type="match status" value="1"/>
</dbReference>
<dbReference type="Gene3D" id="3.20.20.70">
    <property type="entry name" value="Aldolase class I"/>
    <property type="match status" value="1"/>
</dbReference>
<dbReference type="InterPro" id="IPR013785">
    <property type="entry name" value="Aldolase_TIM"/>
</dbReference>
<dbReference type="InterPro" id="IPR034457">
    <property type="entry name" value="Organic_radical-activating"/>
</dbReference>
<dbReference type="InterPro" id="IPR012839">
    <property type="entry name" value="Organic_radical_activase"/>
</dbReference>
<dbReference type="InterPro" id="IPR012838">
    <property type="entry name" value="PFL1_activating"/>
</dbReference>
<dbReference type="InterPro" id="IPR034465">
    <property type="entry name" value="Pyruvate_for-lyase_activase"/>
</dbReference>
<dbReference type="InterPro" id="IPR001989">
    <property type="entry name" value="Radical_activat_CS"/>
</dbReference>
<dbReference type="InterPro" id="IPR007197">
    <property type="entry name" value="rSAM"/>
</dbReference>
<dbReference type="NCBIfam" id="TIGR02493">
    <property type="entry name" value="PFLA"/>
    <property type="match status" value="1"/>
</dbReference>
<dbReference type="NCBIfam" id="NF008356">
    <property type="entry name" value="PRK11145.1"/>
    <property type="match status" value="1"/>
</dbReference>
<dbReference type="PANTHER" id="PTHR30352:SF5">
    <property type="entry name" value="PYRUVATE FORMATE-LYASE 1-ACTIVATING ENZYME"/>
    <property type="match status" value="1"/>
</dbReference>
<dbReference type="PANTHER" id="PTHR30352">
    <property type="entry name" value="PYRUVATE FORMATE-LYASE-ACTIVATING ENZYME"/>
    <property type="match status" value="1"/>
</dbReference>
<dbReference type="Pfam" id="PF13353">
    <property type="entry name" value="Fer4_12"/>
    <property type="match status" value="1"/>
</dbReference>
<dbReference type="Pfam" id="PF04055">
    <property type="entry name" value="Radical_SAM"/>
    <property type="match status" value="1"/>
</dbReference>
<dbReference type="PIRSF" id="PIRSF000371">
    <property type="entry name" value="PFL_act_enz"/>
    <property type="match status" value="1"/>
</dbReference>
<dbReference type="SFLD" id="SFLDG01066">
    <property type="entry name" value="organic_radical-activating_enz"/>
    <property type="match status" value="1"/>
</dbReference>
<dbReference type="SFLD" id="SFLDF00278">
    <property type="entry name" value="pyruvate_formate-lyase_activas"/>
    <property type="match status" value="1"/>
</dbReference>
<dbReference type="SUPFAM" id="SSF102114">
    <property type="entry name" value="Radical SAM enzymes"/>
    <property type="match status" value="1"/>
</dbReference>
<dbReference type="PROSITE" id="PS01087">
    <property type="entry name" value="RADICAL_ACTIVATING"/>
    <property type="match status" value="1"/>
</dbReference>
<dbReference type="PROSITE" id="PS51918">
    <property type="entry name" value="RADICAL_SAM"/>
    <property type="match status" value="1"/>
</dbReference>
<accession>P0A9N5</accession>
<accession>P09374</accession>
<sequence length="246" mass="28204">MSVIGRIHSFESCGTVDGPGIRFITFFQGCLMRCLYCHNRDTWDTHGGKEVTVEDLMKEVVTYRHFMNASGGGVTASGGEAILQAEFVRDWFRACKKEGIHTCLDTNGFVRRYDPVIDELLEVTDLVMLDLKQMNDEIHQNLVGVSNHRTLEFAKYLANKNVKVWIRYVVVPGWSDDDDSAHRLGEFTRDMGNVEKIELLPYHELGKHKWVAMGEEYKLDGVKPPKKETMERVKGILEQYGHKVMF</sequence>
<evidence type="ECO:0000250" key="1"/>
<evidence type="ECO:0000250" key="2">
    <source>
        <dbReference type="UniProtKB" id="P0A9N4"/>
    </source>
</evidence>
<evidence type="ECO:0000255" key="3">
    <source>
        <dbReference type="PROSITE-ProRule" id="PRU01266"/>
    </source>
</evidence>
<evidence type="ECO:0000305" key="4"/>
<reference key="1">
    <citation type="journal article" date="2002" name="Proc. Natl. Acad. Sci. U.S.A.">
        <title>Extensive mosaic structure revealed by the complete genome sequence of uropathogenic Escherichia coli.</title>
        <authorList>
            <person name="Welch R.A."/>
            <person name="Burland V."/>
            <person name="Plunkett G. III"/>
            <person name="Redford P."/>
            <person name="Roesch P."/>
            <person name="Rasko D."/>
            <person name="Buckles E.L."/>
            <person name="Liou S.-R."/>
            <person name="Boutin A."/>
            <person name="Hackett J."/>
            <person name="Stroud D."/>
            <person name="Mayhew G.F."/>
            <person name="Rose D.J."/>
            <person name="Zhou S."/>
            <person name="Schwartz D.C."/>
            <person name="Perna N.T."/>
            <person name="Mobley H.L.T."/>
            <person name="Donnenberg M.S."/>
            <person name="Blattner F.R."/>
        </authorList>
    </citation>
    <scope>NUCLEOTIDE SEQUENCE [LARGE SCALE GENOMIC DNA]</scope>
    <source>
        <strain>CFT073 / ATCC 700928 / UPEC</strain>
    </source>
</reference>